<sequence>MRTLIREHRKELGLTQEELAERVGVTRQTIIALEKGRYSPSLILAHRIARALGREHIEDIFILDEDGAK</sequence>
<feature type="chain" id="PRO_0000149794" description="Uncharacterized HTH-type transcriptional regulator MTH_1328">
    <location>
        <begin position="1"/>
        <end position="69"/>
    </location>
</feature>
<feature type="domain" description="HTH cro/C1-type" evidence="1">
    <location>
        <begin position="5"/>
        <end position="60"/>
    </location>
</feature>
<feature type="DNA-binding region" description="H-T-H motif" evidence="1">
    <location>
        <begin position="16"/>
        <end position="35"/>
    </location>
</feature>
<evidence type="ECO:0000255" key="1">
    <source>
        <dbReference type="PROSITE-ProRule" id="PRU00257"/>
    </source>
</evidence>
<name>Y1328_METTH</name>
<proteinExistence type="predicted"/>
<organism>
    <name type="scientific">Methanothermobacter thermautotrophicus (strain ATCC 29096 / DSM 1053 / JCM 10044 / NBRC 100330 / Delta H)</name>
    <name type="common">Methanobacterium thermoautotrophicum</name>
    <dbReference type="NCBI Taxonomy" id="187420"/>
    <lineage>
        <taxon>Archaea</taxon>
        <taxon>Methanobacteriati</taxon>
        <taxon>Methanobacteriota</taxon>
        <taxon>Methanomada group</taxon>
        <taxon>Methanobacteria</taxon>
        <taxon>Methanobacteriales</taxon>
        <taxon>Methanobacteriaceae</taxon>
        <taxon>Methanothermobacter</taxon>
    </lineage>
</organism>
<reference key="1">
    <citation type="journal article" date="1997" name="J. Bacteriol.">
        <title>Complete genome sequence of Methanobacterium thermoautotrophicum deltaH: functional analysis and comparative genomics.</title>
        <authorList>
            <person name="Smith D.R."/>
            <person name="Doucette-Stamm L.A."/>
            <person name="Deloughery C."/>
            <person name="Lee H.-M."/>
            <person name="Dubois J."/>
            <person name="Aldredge T."/>
            <person name="Bashirzadeh R."/>
            <person name="Blakely D."/>
            <person name="Cook R."/>
            <person name="Gilbert K."/>
            <person name="Harrison D."/>
            <person name="Hoang L."/>
            <person name="Keagle P."/>
            <person name="Lumm W."/>
            <person name="Pothier B."/>
            <person name="Qiu D."/>
            <person name="Spadafora R."/>
            <person name="Vicare R."/>
            <person name="Wang Y."/>
            <person name="Wierzbowski J."/>
            <person name="Gibson R."/>
            <person name="Jiwani N."/>
            <person name="Caruso A."/>
            <person name="Bush D."/>
            <person name="Safer H."/>
            <person name="Patwell D."/>
            <person name="Prabhakar S."/>
            <person name="McDougall S."/>
            <person name="Shimer G."/>
            <person name="Goyal A."/>
            <person name="Pietrovski S."/>
            <person name="Church G.M."/>
            <person name="Daniels C.J."/>
            <person name="Mao J.-I."/>
            <person name="Rice P."/>
            <person name="Noelling J."/>
            <person name="Reeve J.N."/>
        </authorList>
    </citation>
    <scope>NUCLEOTIDE SEQUENCE [LARGE SCALE GENOMIC DNA]</scope>
    <source>
        <strain>ATCC 29096 / DSM 1053 / JCM 10044 / NBRC 100330 / Delta H</strain>
    </source>
</reference>
<protein>
    <recommendedName>
        <fullName>Uncharacterized HTH-type transcriptional regulator MTH_1328</fullName>
    </recommendedName>
</protein>
<keyword id="KW-0238">DNA-binding</keyword>
<keyword id="KW-1185">Reference proteome</keyword>
<keyword id="KW-0804">Transcription</keyword>
<keyword id="KW-0805">Transcription regulation</keyword>
<gene>
    <name type="ordered locus">MTH_1328</name>
</gene>
<dbReference type="EMBL" id="AE000666">
    <property type="protein sequence ID" value="AAB85806.1"/>
    <property type="molecule type" value="Genomic_DNA"/>
</dbReference>
<dbReference type="PIR" id="E69043">
    <property type="entry name" value="E69043"/>
</dbReference>
<dbReference type="RefSeq" id="WP_010876941.1">
    <property type="nucleotide sequence ID" value="NC_000916.1"/>
</dbReference>
<dbReference type="SMR" id="O27383"/>
<dbReference type="STRING" id="187420.MTH_1328"/>
<dbReference type="PaxDb" id="187420-MTH_1328"/>
<dbReference type="EnsemblBacteria" id="AAB85806">
    <property type="protein sequence ID" value="AAB85806"/>
    <property type="gene ID" value="MTH_1328"/>
</dbReference>
<dbReference type="KEGG" id="mth:MTH_1328"/>
<dbReference type="HOGENOM" id="CLU_066192_44_1_2"/>
<dbReference type="InParanoid" id="O27383"/>
<dbReference type="Proteomes" id="UP000005223">
    <property type="component" value="Chromosome"/>
</dbReference>
<dbReference type="GO" id="GO:0003677">
    <property type="term" value="F:DNA binding"/>
    <property type="evidence" value="ECO:0007669"/>
    <property type="project" value="UniProtKB-KW"/>
</dbReference>
<dbReference type="CDD" id="cd00093">
    <property type="entry name" value="HTH_XRE"/>
    <property type="match status" value="1"/>
</dbReference>
<dbReference type="Gene3D" id="1.10.260.40">
    <property type="entry name" value="lambda repressor-like DNA-binding domains"/>
    <property type="match status" value="1"/>
</dbReference>
<dbReference type="InterPro" id="IPR001387">
    <property type="entry name" value="Cro/C1-type_HTH"/>
</dbReference>
<dbReference type="InterPro" id="IPR010982">
    <property type="entry name" value="Lambda_DNA-bd_dom_sf"/>
</dbReference>
<dbReference type="PANTHER" id="PTHR46558:SF4">
    <property type="entry name" value="DNA-BIDING PHAGE PROTEIN"/>
    <property type="match status" value="1"/>
</dbReference>
<dbReference type="PANTHER" id="PTHR46558">
    <property type="entry name" value="TRACRIPTIONAL REGULATORY PROTEIN-RELATED-RELATED"/>
    <property type="match status" value="1"/>
</dbReference>
<dbReference type="Pfam" id="PF01381">
    <property type="entry name" value="HTH_3"/>
    <property type="match status" value="1"/>
</dbReference>
<dbReference type="SMART" id="SM00530">
    <property type="entry name" value="HTH_XRE"/>
    <property type="match status" value="1"/>
</dbReference>
<dbReference type="SUPFAM" id="SSF47413">
    <property type="entry name" value="lambda repressor-like DNA-binding domains"/>
    <property type="match status" value="1"/>
</dbReference>
<dbReference type="PROSITE" id="PS50943">
    <property type="entry name" value="HTH_CROC1"/>
    <property type="match status" value="1"/>
</dbReference>
<accession>O27383</accession>